<sequence>MKFFQEKISIKETNILLKVDNPKFFKIAKNTIINERFNLENYILRNPIFLTSYSPVEVLDNAPKIVKLMAEAGFNADVGPMAAVAGTFSQLIVENLIENDCKNAISENGGDICLKCEMDTTVGLYAGNSSLSGSLGFKLKKEKIKNGYGICTSSGTVGHSVSLGNADSVTVFSKSASIADAAATSIGNFAVGNNVDAINKCLEKAENIPKIDGVFVCMGEHAGKIGKIPQFIKTDKKEGLGNVFEMF</sequence>
<feature type="chain" id="PRO_0000366705" description="UPF0280 protein MmarC7_0482">
    <location>
        <begin position="1"/>
        <end position="247"/>
    </location>
</feature>
<gene>
    <name type="ordered locus">MmarC7_0482</name>
</gene>
<proteinExistence type="inferred from homology"/>
<dbReference type="EMBL" id="CP000745">
    <property type="protein sequence ID" value="ABR65551.1"/>
    <property type="molecule type" value="Genomic_DNA"/>
</dbReference>
<dbReference type="SMR" id="A6VGH5"/>
<dbReference type="STRING" id="426368.MmarC7_0482"/>
<dbReference type="KEGG" id="mmz:MmarC7_0482"/>
<dbReference type="eggNOG" id="arCOG04376">
    <property type="taxonomic scope" value="Archaea"/>
</dbReference>
<dbReference type="HOGENOM" id="CLU_074757_0_0_2"/>
<dbReference type="OrthoDB" id="50299at2157"/>
<dbReference type="Gene3D" id="3.10.520.10">
    <property type="entry name" value="ApbE-like domains"/>
    <property type="match status" value="1"/>
</dbReference>
<dbReference type="HAMAP" id="MF_01079">
    <property type="entry name" value="UPF0280"/>
    <property type="match status" value="1"/>
</dbReference>
<dbReference type="InterPro" id="IPR003374">
    <property type="entry name" value="ApbE-like_sf"/>
</dbReference>
<dbReference type="InterPro" id="IPR037456">
    <property type="entry name" value="MA1715-like"/>
</dbReference>
<dbReference type="InterPro" id="IPR007183">
    <property type="entry name" value="UPF0280"/>
</dbReference>
<dbReference type="NCBIfam" id="NF003321">
    <property type="entry name" value="PRK04334.1-1"/>
    <property type="match status" value="1"/>
</dbReference>
<dbReference type="PIRSF" id="PIRSF006421">
    <property type="entry name" value="UCP006421"/>
    <property type="match status" value="1"/>
</dbReference>
<dbReference type="SUPFAM" id="SSF143631">
    <property type="entry name" value="ApbE-like"/>
    <property type="match status" value="1"/>
</dbReference>
<reference key="1">
    <citation type="submission" date="2007-06" db="EMBL/GenBank/DDBJ databases">
        <title>Complete sequence of Methanococcus maripaludis C7.</title>
        <authorList>
            <consortium name="US DOE Joint Genome Institute"/>
            <person name="Copeland A."/>
            <person name="Lucas S."/>
            <person name="Lapidus A."/>
            <person name="Barry K."/>
            <person name="Glavina del Rio T."/>
            <person name="Dalin E."/>
            <person name="Tice H."/>
            <person name="Pitluck S."/>
            <person name="Clum A."/>
            <person name="Schmutz J."/>
            <person name="Larimer F."/>
            <person name="Land M."/>
            <person name="Hauser L."/>
            <person name="Kyrpides N."/>
            <person name="Anderson I."/>
            <person name="Sieprawska-Lupa M."/>
            <person name="Whitman W.B."/>
            <person name="Richardson P."/>
        </authorList>
    </citation>
    <scope>NUCLEOTIDE SEQUENCE [LARGE SCALE GENOMIC DNA]</scope>
    <source>
        <strain>C7 / ATCC BAA-1331</strain>
    </source>
</reference>
<evidence type="ECO:0000255" key="1">
    <source>
        <dbReference type="HAMAP-Rule" id="MF_01079"/>
    </source>
</evidence>
<accession>A6VGH5</accession>
<protein>
    <recommendedName>
        <fullName evidence="1">UPF0280 protein MmarC7_0482</fullName>
    </recommendedName>
</protein>
<name>Y482_METM7</name>
<comment type="similarity">
    <text evidence="1">Belongs to the UPF0280 family.</text>
</comment>
<organism>
    <name type="scientific">Methanococcus maripaludis (strain C7 / ATCC BAA-1331)</name>
    <dbReference type="NCBI Taxonomy" id="426368"/>
    <lineage>
        <taxon>Archaea</taxon>
        <taxon>Methanobacteriati</taxon>
        <taxon>Methanobacteriota</taxon>
        <taxon>Methanomada group</taxon>
        <taxon>Methanococci</taxon>
        <taxon>Methanococcales</taxon>
        <taxon>Methanococcaceae</taxon>
        <taxon>Methanococcus</taxon>
    </lineage>
</organism>